<protein>
    <recommendedName>
        <fullName evidence="1">tRNA (guanine-N(1)-)-methyltransferase</fullName>
        <ecNumber evidence="1">2.1.1.228</ecNumber>
    </recommendedName>
    <alternativeName>
        <fullName evidence="1">M1G-methyltransferase</fullName>
    </alternativeName>
    <alternativeName>
        <fullName evidence="1">tRNA [GM37] methyltransferase</fullName>
    </alternativeName>
</protein>
<keyword id="KW-0963">Cytoplasm</keyword>
<keyword id="KW-0489">Methyltransferase</keyword>
<keyword id="KW-0949">S-adenosyl-L-methionine</keyword>
<keyword id="KW-0808">Transferase</keyword>
<keyword id="KW-0819">tRNA processing</keyword>
<reference key="1">
    <citation type="journal article" date="2006" name="Proc. Natl. Acad. Sci. U.S.A.">
        <title>Comparative genomics of the lactic acid bacteria.</title>
        <authorList>
            <person name="Makarova K.S."/>
            <person name="Slesarev A."/>
            <person name="Wolf Y.I."/>
            <person name="Sorokin A."/>
            <person name="Mirkin B."/>
            <person name="Koonin E.V."/>
            <person name="Pavlov A."/>
            <person name="Pavlova N."/>
            <person name="Karamychev V."/>
            <person name="Polouchine N."/>
            <person name="Shakhova V."/>
            <person name="Grigoriev I."/>
            <person name="Lou Y."/>
            <person name="Rohksar D."/>
            <person name="Lucas S."/>
            <person name="Huang K."/>
            <person name="Goodstein D.M."/>
            <person name="Hawkins T."/>
            <person name="Plengvidhya V."/>
            <person name="Welker D."/>
            <person name="Hughes J."/>
            <person name="Goh Y."/>
            <person name="Benson A."/>
            <person name="Baldwin K."/>
            <person name="Lee J.-H."/>
            <person name="Diaz-Muniz I."/>
            <person name="Dosti B."/>
            <person name="Smeianov V."/>
            <person name="Wechter W."/>
            <person name="Barabote R."/>
            <person name="Lorca G."/>
            <person name="Altermann E."/>
            <person name="Barrangou R."/>
            <person name="Ganesan B."/>
            <person name="Xie Y."/>
            <person name="Rawsthorne H."/>
            <person name="Tamir D."/>
            <person name="Parker C."/>
            <person name="Breidt F."/>
            <person name="Broadbent J.R."/>
            <person name="Hutkins R."/>
            <person name="O'Sullivan D."/>
            <person name="Steele J."/>
            <person name="Unlu G."/>
            <person name="Saier M.H. Jr."/>
            <person name="Klaenhammer T."/>
            <person name="Richardson P."/>
            <person name="Kozyavkin S."/>
            <person name="Weimer B.C."/>
            <person name="Mills D.A."/>
        </authorList>
    </citation>
    <scope>NUCLEOTIDE SEQUENCE [LARGE SCALE GENOMIC DNA]</scope>
    <source>
        <strain>ATCC BAA-491 / LMD-9</strain>
    </source>
</reference>
<comment type="function">
    <text evidence="1">Specifically methylates guanosine-37 in various tRNAs.</text>
</comment>
<comment type="catalytic activity">
    <reaction evidence="1">
        <text>guanosine(37) in tRNA + S-adenosyl-L-methionine = N(1)-methylguanosine(37) in tRNA + S-adenosyl-L-homocysteine + H(+)</text>
        <dbReference type="Rhea" id="RHEA:36899"/>
        <dbReference type="Rhea" id="RHEA-COMP:10145"/>
        <dbReference type="Rhea" id="RHEA-COMP:10147"/>
        <dbReference type="ChEBI" id="CHEBI:15378"/>
        <dbReference type="ChEBI" id="CHEBI:57856"/>
        <dbReference type="ChEBI" id="CHEBI:59789"/>
        <dbReference type="ChEBI" id="CHEBI:73542"/>
        <dbReference type="ChEBI" id="CHEBI:74269"/>
        <dbReference type="EC" id="2.1.1.228"/>
    </reaction>
</comment>
<comment type="subunit">
    <text evidence="1">Homodimer.</text>
</comment>
<comment type="subcellular location">
    <subcellularLocation>
        <location evidence="1">Cytoplasm</location>
    </subcellularLocation>
</comment>
<comment type="similarity">
    <text evidence="1">Belongs to the RNA methyltransferase TrmD family.</text>
</comment>
<name>TRMD_STRTD</name>
<accession>Q03JS1</accession>
<feature type="chain" id="PRO_1000006531" description="tRNA (guanine-N(1)-)-methyltransferase">
    <location>
        <begin position="1"/>
        <end position="239"/>
    </location>
</feature>
<feature type="binding site" evidence="1">
    <location>
        <position position="108"/>
    </location>
    <ligand>
        <name>S-adenosyl-L-methionine</name>
        <dbReference type="ChEBI" id="CHEBI:59789"/>
    </ligand>
</feature>
<feature type="binding site" evidence="1">
    <location>
        <begin position="127"/>
        <end position="132"/>
    </location>
    <ligand>
        <name>S-adenosyl-L-methionine</name>
        <dbReference type="ChEBI" id="CHEBI:59789"/>
    </ligand>
</feature>
<dbReference type="EC" id="2.1.1.228" evidence="1"/>
<dbReference type="EMBL" id="CP000419">
    <property type="protein sequence ID" value="ABJ66551.1"/>
    <property type="molecule type" value="Genomic_DNA"/>
</dbReference>
<dbReference type="RefSeq" id="WP_011226285.1">
    <property type="nucleotide sequence ID" value="NZ_CP086001.1"/>
</dbReference>
<dbReference type="SMR" id="Q03JS1"/>
<dbReference type="KEGG" id="ste:STER_1383"/>
<dbReference type="HOGENOM" id="CLU_047363_0_1_9"/>
<dbReference type="GO" id="GO:0005829">
    <property type="term" value="C:cytosol"/>
    <property type="evidence" value="ECO:0007669"/>
    <property type="project" value="TreeGrafter"/>
</dbReference>
<dbReference type="GO" id="GO:0052906">
    <property type="term" value="F:tRNA (guanine(37)-N1)-methyltransferase activity"/>
    <property type="evidence" value="ECO:0007669"/>
    <property type="project" value="UniProtKB-UniRule"/>
</dbReference>
<dbReference type="GO" id="GO:0002939">
    <property type="term" value="P:tRNA N1-guanine methylation"/>
    <property type="evidence" value="ECO:0007669"/>
    <property type="project" value="TreeGrafter"/>
</dbReference>
<dbReference type="CDD" id="cd18080">
    <property type="entry name" value="TrmD-like"/>
    <property type="match status" value="1"/>
</dbReference>
<dbReference type="FunFam" id="1.10.1270.20:FF:000001">
    <property type="entry name" value="tRNA (guanine-N(1)-)-methyltransferase"/>
    <property type="match status" value="1"/>
</dbReference>
<dbReference type="FunFam" id="3.40.1280.10:FF:000001">
    <property type="entry name" value="tRNA (guanine-N(1)-)-methyltransferase"/>
    <property type="match status" value="1"/>
</dbReference>
<dbReference type="Gene3D" id="3.40.1280.10">
    <property type="match status" value="1"/>
</dbReference>
<dbReference type="Gene3D" id="1.10.1270.20">
    <property type="entry name" value="tRNA(m1g37)methyltransferase, domain 2"/>
    <property type="match status" value="1"/>
</dbReference>
<dbReference type="HAMAP" id="MF_00605">
    <property type="entry name" value="TrmD"/>
    <property type="match status" value="1"/>
</dbReference>
<dbReference type="InterPro" id="IPR029028">
    <property type="entry name" value="Alpha/beta_knot_MTases"/>
</dbReference>
<dbReference type="InterPro" id="IPR023148">
    <property type="entry name" value="tRNA_m1G_MeTrfase_C_sf"/>
</dbReference>
<dbReference type="InterPro" id="IPR002649">
    <property type="entry name" value="tRNA_m1G_MeTrfase_TrmD"/>
</dbReference>
<dbReference type="InterPro" id="IPR029026">
    <property type="entry name" value="tRNA_m1G_MTases_N"/>
</dbReference>
<dbReference type="InterPro" id="IPR016009">
    <property type="entry name" value="tRNA_MeTrfase_TRMD/TRM10"/>
</dbReference>
<dbReference type="NCBIfam" id="NF000648">
    <property type="entry name" value="PRK00026.1"/>
    <property type="match status" value="1"/>
</dbReference>
<dbReference type="NCBIfam" id="TIGR00088">
    <property type="entry name" value="trmD"/>
    <property type="match status" value="1"/>
</dbReference>
<dbReference type="PANTHER" id="PTHR46417">
    <property type="entry name" value="TRNA (GUANINE-N(1)-)-METHYLTRANSFERASE"/>
    <property type="match status" value="1"/>
</dbReference>
<dbReference type="PANTHER" id="PTHR46417:SF1">
    <property type="entry name" value="TRNA (GUANINE-N(1)-)-METHYLTRANSFERASE"/>
    <property type="match status" value="1"/>
</dbReference>
<dbReference type="Pfam" id="PF01746">
    <property type="entry name" value="tRNA_m1G_MT"/>
    <property type="match status" value="1"/>
</dbReference>
<dbReference type="PIRSF" id="PIRSF000386">
    <property type="entry name" value="tRNA_mtase"/>
    <property type="match status" value="1"/>
</dbReference>
<dbReference type="SUPFAM" id="SSF75217">
    <property type="entry name" value="alpha/beta knot"/>
    <property type="match status" value="1"/>
</dbReference>
<gene>
    <name evidence="1" type="primary">trmD</name>
    <name type="ordered locus">STER_1383</name>
</gene>
<sequence length="239" mass="27398">MKIDILTLFPDMFAPLEHSIVGKAKDKGILEINYHNFRDNAEKARHVDDEPYGGGQGMLLRAQPIFDTFDKLNVTKPRVILLDPAGRTFNQAYAEELAQEEELVFICGHYEGYDERIKTLVTDEISLGDFVLTGGELAAMTIVDATVRLIPEVLGKEASHKDDSFSSGLLEFPQYTRPAEFRGMKVPDVLLSGHHVNIRRWRMEQSLRKTWERRPDLLENYDFTDEERQILEEIKSEGK</sequence>
<evidence type="ECO:0000255" key="1">
    <source>
        <dbReference type="HAMAP-Rule" id="MF_00605"/>
    </source>
</evidence>
<proteinExistence type="inferred from homology"/>
<organism>
    <name type="scientific">Streptococcus thermophilus (strain ATCC BAA-491 / LMD-9)</name>
    <dbReference type="NCBI Taxonomy" id="322159"/>
    <lineage>
        <taxon>Bacteria</taxon>
        <taxon>Bacillati</taxon>
        <taxon>Bacillota</taxon>
        <taxon>Bacilli</taxon>
        <taxon>Lactobacillales</taxon>
        <taxon>Streptococcaceae</taxon>
        <taxon>Streptococcus</taxon>
    </lineage>
</organism>